<comment type="catalytic activity">
    <reaction evidence="1">
        <text>tRNA(Lys) + L-lysine + ATP = L-lysyl-tRNA(Lys) + AMP + diphosphate</text>
        <dbReference type="Rhea" id="RHEA:20792"/>
        <dbReference type="Rhea" id="RHEA-COMP:9696"/>
        <dbReference type="Rhea" id="RHEA-COMP:9697"/>
        <dbReference type="ChEBI" id="CHEBI:30616"/>
        <dbReference type="ChEBI" id="CHEBI:32551"/>
        <dbReference type="ChEBI" id="CHEBI:33019"/>
        <dbReference type="ChEBI" id="CHEBI:78442"/>
        <dbReference type="ChEBI" id="CHEBI:78529"/>
        <dbReference type="ChEBI" id="CHEBI:456215"/>
        <dbReference type="EC" id="6.1.1.6"/>
    </reaction>
</comment>
<comment type="cofactor">
    <cofactor evidence="1">
        <name>Mg(2+)</name>
        <dbReference type="ChEBI" id="CHEBI:18420"/>
    </cofactor>
    <text evidence="1">Binds 3 Mg(2+) ions per subunit.</text>
</comment>
<comment type="subunit">
    <text evidence="1">Homodimer.</text>
</comment>
<comment type="subcellular location">
    <subcellularLocation>
        <location evidence="1">Cytoplasm</location>
    </subcellularLocation>
</comment>
<comment type="similarity">
    <text evidence="1">Belongs to the class-II aminoacyl-tRNA synthetase family.</text>
</comment>
<feature type="chain" id="PRO_1000012854" description="Lysine--tRNA ligase">
    <location>
        <begin position="1"/>
        <end position="508"/>
    </location>
</feature>
<feature type="binding site" evidence="1">
    <location>
        <position position="418"/>
    </location>
    <ligand>
        <name>Mg(2+)</name>
        <dbReference type="ChEBI" id="CHEBI:18420"/>
        <label>1</label>
    </ligand>
</feature>
<feature type="binding site" evidence="1">
    <location>
        <position position="425"/>
    </location>
    <ligand>
        <name>Mg(2+)</name>
        <dbReference type="ChEBI" id="CHEBI:18420"/>
        <label>1</label>
    </ligand>
</feature>
<feature type="binding site" evidence="1">
    <location>
        <position position="425"/>
    </location>
    <ligand>
        <name>Mg(2+)</name>
        <dbReference type="ChEBI" id="CHEBI:18420"/>
        <label>2</label>
    </ligand>
</feature>
<accession>A1V5L6</accession>
<name>SYK_BURMS</name>
<organism>
    <name type="scientific">Burkholderia mallei (strain SAVP1)</name>
    <dbReference type="NCBI Taxonomy" id="320388"/>
    <lineage>
        <taxon>Bacteria</taxon>
        <taxon>Pseudomonadati</taxon>
        <taxon>Pseudomonadota</taxon>
        <taxon>Betaproteobacteria</taxon>
        <taxon>Burkholderiales</taxon>
        <taxon>Burkholderiaceae</taxon>
        <taxon>Burkholderia</taxon>
        <taxon>pseudomallei group</taxon>
    </lineage>
</organism>
<protein>
    <recommendedName>
        <fullName evidence="1">Lysine--tRNA ligase</fullName>
        <ecNumber evidence="1">6.1.1.6</ecNumber>
    </recommendedName>
    <alternativeName>
        <fullName evidence="1">Lysyl-tRNA synthetase</fullName>
        <shortName evidence="1">LysRS</shortName>
    </alternativeName>
</protein>
<dbReference type="EC" id="6.1.1.6" evidence="1"/>
<dbReference type="EMBL" id="CP000526">
    <property type="protein sequence ID" value="ABM52914.1"/>
    <property type="molecule type" value="Genomic_DNA"/>
</dbReference>
<dbReference type="RefSeq" id="WP_004192783.1">
    <property type="nucleotide sequence ID" value="NC_008785.1"/>
</dbReference>
<dbReference type="SMR" id="A1V5L6"/>
<dbReference type="GeneID" id="93060838"/>
<dbReference type="KEGG" id="bmv:BMASAVP1_A2207"/>
<dbReference type="HOGENOM" id="CLU_008255_6_0_4"/>
<dbReference type="GO" id="GO:0005829">
    <property type="term" value="C:cytosol"/>
    <property type="evidence" value="ECO:0007669"/>
    <property type="project" value="TreeGrafter"/>
</dbReference>
<dbReference type="GO" id="GO:0005524">
    <property type="term" value="F:ATP binding"/>
    <property type="evidence" value="ECO:0007669"/>
    <property type="project" value="UniProtKB-UniRule"/>
</dbReference>
<dbReference type="GO" id="GO:0004824">
    <property type="term" value="F:lysine-tRNA ligase activity"/>
    <property type="evidence" value="ECO:0007669"/>
    <property type="project" value="UniProtKB-UniRule"/>
</dbReference>
<dbReference type="GO" id="GO:0000287">
    <property type="term" value="F:magnesium ion binding"/>
    <property type="evidence" value="ECO:0007669"/>
    <property type="project" value="UniProtKB-UniRule"/>
</dbReference>
<dbReference type="GO" id="GO:0000049">
    <property type="term" value="F:tRNA binding"/>
    <property type="evidence" value="ECO:0007669"/>
    <property type="project" value="TreeGrafter"/>
</dbReference>
<dbReference type="GO" id="GO:0006430">
    <property type="term" value="P:lysyl-tRNA aminoacylation"/>
    <property type="evidence" value="ECO:0007669"/>
    <property type="project" value="UniProtKB-UniRule"/>
</dbReference>
<dbReference type="CDD" id="cd00775">
    <property type="entry name" value="LysRS_core"/>
    <property type="match status" value="1"/>
</dbReference>
<dbReference type="CDD" id="cd04322">
    <property type="entry name" value="LysRS_N"/>
    <property type="match status" value="1"/>
</dbReference>
<dbReference type="FunFam" id="2.40.50.140:FF:000024">
    <property type="entry name" value="Lysine--tRNA ligase"/>
    <property type="match status" value="1"/>
</dbReference>
<dbReference type="FunFam" id="3.30.930.10:FF:000001">
    <property type="entry name" value="Lysine--tRNA ligase"/>
    <property type="match status" value="1"/>
</dbReference>
<dbReference type="Gene3D" id="3.30.930.10">
    <property type="entry name" value="Bira Bifunctional Protein, Domain 2"/>
    <property type="match status" value="1"/>
</dbReference>
<dbReference type="Gene3D" id="2.40.50.140">
    <property type="entry name" value="Nucleic acid-binding proteins"/>
    <property type="match status" value="1"/>
</dbReference>
<dbReference type="HAMAP" id="MF_00252">
    <property type="entry name" value="Lys_tRNA_synth_class2"/>
    <property type="match status" value="1"/>
</dbReference>
<dbReference type="InterPro" id="IPR004364">
    <property type="entry name" value="Aa-tRNA-synt_II"/>
</dbReference>
<dbReference type="InterPro" id="IPR006195">
    <property type="entry name" value="aa-tRNA-synth_II"/>
</dbReference>
<dbReference type="InterPro" id="IPR045864">
    <property type="entry name" value="aa-tRNA-synth_II/BPL/LPL"/>
</dbReference>
<dbReference type="InterPro" id="IPR002313">
    <property type="entry name" value="Lys-tRNA-ligase_II"/>
</dbReference>
<dbReference type="InterPro" id="IPR044136">
    <property type="entry name" value="Lys-tRNA-ligase_II_N"/>
</dbReference>
<dbReference type="InterPro" id="IPR018149">
    <property type="entry name" value="Lys-tRNA-synth_II_C"/>
</dbReference>
<dbReference type="InterPro" id="IPR012340">
    <property type="entry name" value="NA-bd_OB-fold"/>
</dbReference>
<dbReference type="InterPro" id="IPR004365">
    <property type="entry name" value="NA-bd_OB_tRNA"/>
</dbReference>
<dbReference type="NCBIfam" id="TIGR00499">
    <property type="entry name" value="lysS_bact"/>
    <property type="match status" value="1"/>
</dbReference>
<dbReference type="NCBIfam" id="NF001756">
    <property type="entry name" value="PRK00484.1"/>
    <property type="match status" value="1"/>
</dbReference>
<dbReference type="PANTHER" id="PTHR42918:SF15">
    <property type="entry name" value="LYSINE--TRNA LIGASE, CHLOROPLASTIC_MITOCHONDRIAL"/>
    <property type="match status" value="1"/>
</dbReference>
<dbReference type="PANTHER" id="PTHR42918">
    <property type="entry name" value="LYSYL-TRNA SYNTHETASE"/>
    <property type="match status" value="1"/>
</dbReference>
<dbReference type="Pfam" id="PF00152">
    <property type="entry name" value="tRNA-synt_2"/>
    <property type="match status" value="1"/>
</dbReference>
<dbReference type="Pfam" id="PF01336">
    <property type="entry name" value="tRNA_anti-codon"/>
    <property type="match status" value="1"/>
</dbReference>
<dbReference type="PRINTS" id="PR00982">
    <property type="entry name" value="TRNASYNTHLYS"/>
</dbReference>
<dbReference type="SUPFAM" id="SSF55681">
    <property type="entry name" value="Class II aaRS and biotin synthetases"/>
    <property type="match status" value="1"/>
</dbReference>
<dbReference type="SUPFAM" id="SSF50249">
    <property type="entry name" value="Nucleic acid-binding proteins"/>
    <property type="match status" value="1"/>
</dbReference>
<dbReference type="PROSITE" id="PS50862">
    <property type="entry name" value="AA_TRNA_LIGASE_II"/>
    <property type="match status" value="1"/>
</dbReference>
<proteinExistence type="inferred from homology"/>
<sequence length="508" mass="57202">MTEPTQPQAAVAADENQIVAERRDKLRALRDQGIAYPNDFQPTHHAAGLQTEYADADKEALDAKALDVAVAGRMMLKRVMGKASFATVQDGSGQIQFFVTPADVGAETYDAFKKWDLGDIVAARGVLFRTNKGELSVKCTELRLLAKALRPLPDKFHGLADQETRYRQRYVDLIVTPETRATFRARTKAIASIRKFMSDADFMEVETPMLHPIPGGAAAKPFVTHHNALDMQMFLRIAPELYLKRLIVGGFERVFEINRNFRNEGVSPRHNPEFTMMEFYAAYTDYRWLMDFTERLIRQAAVDALGTATIRYQGRELDLAKPFHRLTITQAIQKYAPNYTDGQLSDDAFLRGELKRLGVDVTQPAFLNAGIGALQLALFEETAEAQLWEPTFIIDYPIEVSPLARESDTVAGITERFELFVTGREIANGFSELNDPEDQAARFRKQVEQKDAGDEEAMFFDADYIRALEYGMPPTGGCGIGIDRLVMLLTDSPTIRDVLLFPHLRRED</sequence>
<gene>
    <name evidence="1" type="primary">lysS</name>
    <name type="ordered locus">BMASAVP1_A2207</name>
</gene>
<evidence type="ECO:0000255" key="1">
    <source>
        <dbReference type="HAMAP-Rule" id="MF_00252"/>
    </source>
</evidence>
<reference key="1">
    <citation type="journal article" date="2010" name="Genome Biol. Evol.">
        <title>Continuing evolution of Burkholderia mallei through genome reduction and large-scale rearrangements.</title>
        <authorList>
            <person name="Losada L."/>
            <person name="Ronning C.M."/>
            <person name="DeShazer D."/>
            <person name="Woods D."/>
            <person name="Fedorova N."/>
            <person name="Kim H.S."/>
            <person name="Shabalina S.A."/>
            <person name="Pearson T.R."/>
            <person name="Brinkac L."/>
            <person name="Tan P."/>
            <person name="Nandi T."/>
            <person name="Crabtree J."/>
            <person name="Badger J."/>
            <person name="Beckstrom-Sternberg S."/>
            <person name="Saqib M."/>
            <person name="Schutzer S.E."/>
            <person name="Keim P."/>
            <person name="Nierman W.C."/>
        </authorList>
    </citation>
    <scope>NUCLEOTIDE SEQUENCE [LARGE SCALE GENOMIC DNA]</scope>
    <source>
        <strain>SAVP1</strain>
    </source>
</reference>
<keyword id="KW-0030">Aminoacyl-tRNA synthetase</keyword>
<keyword id="KW-0067">ATP-binding</keyword>
<keyword id="KW-0963">Cytoplasm</keyword>
<keyword id="KW-0436">Ligase</keyword>
<keyword id="KW-0460">Magnesium</keyword>
<keyword id="KW-0479">Metal-binding</keyword>
<keyword id="KW-0547">Nucleotide-binding</keyword>
<keyword id="KW-0648">Protein biosynthesis</keyword>